<protein>
    <recommendedName>
        <fullName evidence="1">Large ribosomal subunit protein bL31B</fullName>
    </recommendedName>
    <alternativeName>
        <fullName evidence="2">50S ribosomal protein L31 type B</fullName>
    </alternativeName>
</protein>
<feature type="chain" id="PRO_1000126783" description="Large ribosomal subunit protein bL31B">
    <location>
        <begin position="1"/>
        <end position="81"/>
    </location>
</feature>
<name>RL31B_BACC0</name>
<proteinExistence type="inferred from homology"/>
<keyword id="KW-0687">Ribonucleoprotein</keyword>
<keyword id="KW-0689">Ribosomal protein</keyword>
<sequence length="81" mass="9184">MKAGIHPDYKKVVFMDTNTGFKFLSGSTKGSNETVEWEDGNTYPLLKVEISSDSHPFYTGRQKFATADGRVDRFNKKYGLK</sequence>
<reference key="1">
    <citation type="submission" date="2008-10" db="EMBL/GenBank/DDBJ databases">
        <title>Genome sequence of Bacillus cereus AH820.</title>
        <authorList>
            <person name="Dodson R.J."/>
            <person name="Durkin A.S."/>
            <person name="Rosovitz M.J."/>
            <person name="Rasko D.A."/>
            <person name="Hoffmaster A."/>
            <person name="Ravel J."/>
            <person name="Sutton G."/>
        </authorList>
    </citation>
    <scope>NUCLEOTIDE SEQUENCE [LARGE SCALE GENOMIC DNA]</scope>
    <source>
        <strain>AH820</strain>
    </source>
</reference>
<accession>B7JHF3</accession>
<dbReference type="EMBL" id="CP001283">
    <property type="protein sequence ID" value="ACK90625.1"/>
    <property type="molecule type" value="Genomic_DNA"/>
</dbReference>
<dbReference type="RefSeq" id="WP_000643433.1">
    <property type="nucleotide sequence ID" value="NC_011773.1"/>
</dbReference>
<dbReference type="SMR" id="B7JHF3"/>
<dbReference type="KEGG" id="bcu:BCAH820_5423"/>
<dbReference type="HOGENOM" id="CLU_114306_2_2_9"/>
<dbReference type="Proteomes" id="UP000001363">
    <property type="component" value="Chromosome"/>
</dbReference>
<dbReference type="GO" id="GO:1990904">
    <property type="term" value="C:ribonucleoprotein complex"/>
    <property type="evidence" value="ECO:0007669"/>
    <property type="project" value="UniProtKB-KW"/>
</dbReference>
<dbReference type="GO" id="GO:0005840">
    <property type="term" value="C:ribosome"/>
    <property type="evidence" value="ECO:0007669"/>
    <property type="project" value="UniProtKB-KW"/>
</dbReference>
<dbReference type="GO" id="GO:0003735">
    <property type="term" value="F:structural constituent of ribosome"/>
    <property type="evidence" value="ECO:0007669"/>
    <property type="project" value="InterPro"/>
</dbReference>
<dbReference type="GO" id="GO:0006412">
    <property type="term" value="P:translation"/>
    <property type="evidence" value="ECO:0007669"/>
    <property type="project" value="UniProtKB-UniRule"/>
</dbReference>
<dbReference type="Gene3D" id="4.10.830.30">
    <property type="entry name" value="Ribosomal protein L31"/>
    <property type="match status" value="1"/>
</dbReference>
<dbReference type="HAMAP" id="MF_00502">
    <property type="entry name" value="Ribosomal_bL31_2"/>
    <property type="match status" value="1"/>
</dbReference>
<dbReference type="InterPro" id="IPR034704">
    <property type="entry name" value="Ribosomal_bL28/bL31-like_sf"/>
</dbReference>
<dbReference type="InterPro" id="IPR002150">
    <property type="entry name" value="Ribosomal_bL31"/>
</dbReference>
<dbReference type="InterPro" id="IPR027493">
    <property type="entry name" value="Ribosomal_bL31_B"/>
</dbReference>
<dbReference type="InterPro" id="IPR042105">
    <property type="entry name" value="Ribosomal_bL31_sf"/>
</dbReference>
<dbReference type="NCBIfam" id="TIGR00105">
    <property type="entry name" value="L31"/>
    <property type="match status" value="1"/>
</dbReference>
<dbReference type="NCBIfam" id="NF002462">
    <property type="entry name" value="PRK01678.1"/>
    <property type="match status" value="1"/>
</dbReference>
<dbReference type="PANTHER" id="PTHR33280">
    <property type="entry name" value="50S RIBOSOMAL PROTEIN L31, CHLOROPLASTIC"/>
    <property type="match status" value="1"/>
</dbReference>
<dbReference type="PANTHER" id="PTHR33280:SF1">
    <property type="entry name" value="LARGE RIBOSOMAL SUBUNIT PROTEIN BL31C"/>
    <property type="match status" value="1"/>
</dbReference>
<dbReference type="Pfam" id="PF01197">
    <property type="entry name" value="Ribosomal_L31"/>
    <property type="match status" value="1"/>
</dbReference>
<dbReference type="PRINTS" id="PR01249">
    <property type="entry name" value="RIBOSOMALL31"/>
</dbReference>
<dbReference type="SUPFAM" id="SSF143800">
    <property type="entry name" value="L28p-like"/>
    <property type="match status" value="1"/>
</dbReference>
<dbReference type="PROSITE" id="PS01143">
    <property type="entry name" value="RIBOSOMAL_L31"/>
    <property type="match status" value="1"/>
</dbReference>
<comment type="subunit">
    <text evidence="1">Part of the 50S ribosomal subunit.</text>
</comment>
<comment type="similarity">
    <text evidence="1">Belongs to the bacterial ribosomal protein bL31 family. Type B subfamily.</text>
</comment>
<evidence type="ECO:0000255" key="1">
    <source>
        <dbReference type="HAMAP-Rule" id="MF_00502"/>
    </source>
</evidence>
<evidence type="ECO:0000305" key="2"/>
<organism>
    <name type="scientific">Bacillus cereus (strain AH820)</name>
    <dbReference type="NCBI Taxonomy" id="405535"/>
    <lineage>
        <taxon>Bacteria</taxon>
        <taxon>Bacillati</taxon>
        <taxon>Bacillota</taxon>
        <taxon>Bacilli</taxon>
        <taxon>Bacillales</taxon>
        <taxon>Bacillaceae</taxon>
        <taxon>Bacillus</taxon>
        <taxon>Bacillus cereus group</taxon>
    </lineage>
</organism>
<gene>
    <name evidence="1" type="primary">rpmE2</name>
    <name type="ordered locus">BCAH820_5423</name>
</gene>